<comment type="function">
    <text evidence="1">One of the components of the core complex of photosystem II (PSII), required for its stability and/or assembly. PSII is a light-driven water:plastoquinone oxidoreductase that uses light energy to abstract electrons from H(2)O, generating O(2) and a proton gradient subsequently used for ATP formation. It consists of a core antenna complex that captures photons, and an electron transfer chain that converts photonic excitation into a charge separation.</text>
</comment>
<comment type="subunit">
    <text evidence="2">PSII is composed of 1 copy each of membrane proteins PsbA, PsbB, PsbC, PsbD, PsbE, PsbF, PsbH, PsbI, PsbJ, PsbK, PsbL, PsbM, PsbT, PsbY, PsbZ, Psb30/Ycf12, at least 3 peripheral proteins of the oxygen-evolving complex and a large number of cofactors. It forms dimeric complexes.</text>
</comment>
<comment type="subcellular location">
    <subcellularLocation>
        <location evidence="1">Plastid</location>
        <location evidence="1">Chloroplast thylakoid membrane</location>
        <topology evidence="1">Single-pass membrane protein</topology>
    </subcellularLocation>
</comment>
<comment type="similarity">
    <text evidence="1">Belongs to the PsbI family.</text>
</comment>
<evidence type="ECO:0000255" key="1">
    <source>
        <dbReference type="HAMAP-Rule" id="MF_01316"/>
    </source>
</evidence>
<evidence type="ECO:0000305" key="2"/>
<reference key="1">
    <citation type="journal article" date="2000" name="J. Mol. Evol.">
        <title>The structure and gene repertoire of an ancient red algal plastid genome.</title>
        <authorList>
            <person name="Gloeckner G."/>
            <person name="Rosenthal A."/>
            <person name="Valentin K.-U."/>
        </authorList>
    </citation>
    <scope>NUCLEOTIDE SEQUENCE [LARGE SCALE GENOMIC DNA]</scope>
    <source>
        <strain>RK-1</strain>
    </source>
</reference>
<sequence length="38" mass="4468">MFTLKIFVYSCVAFFCSLFIFGFLSNDPSRNPNRKDLE</sequence>
<keyword id="KW-0002">3D-structure</keyword>
<keyword id="KW-0150">Chloroplast</keyword>
<keyword id="KW-0472">Membrane</keyword>
<keyword id="KW-0602">Photosynthesis</keyword>
<keyword id="KW-0604">Photosystem II</keyword>
<keyword id="KW-0934">Plastid</keyword>
<keyword id="KW-0674">Reaction center</keyword>
<keyword id="KW-0793">Thylakoid</keyword>
<keyword id="KW-0812">Transmembrane</keyword>
<keyword id="KW-1133">Transmembrane helix</keyword>
<proteinExistence type="evidence at protein level"/>
<dbReference type="EMBL" id="AF022186">
    <property type="protein sequence ID" value="AAB82707.1"/>
    <property type="molecule type" value="Genomic_DNA"/>
</dbReference>
<dbReference type="PIR" id="T11950">
    <property type="entry name" value="T11950"/>
</dbReference>
<dbReference type="RefSeq" id="NP_045054.1">
    <property type="nucleotide sequence ID" value="NC_001840.1"/>
</dbReference>
<dbReference type="PDB" id="4YUU">
    <property type="method" value="X-ray"/>
    <property type="resolution" value="2.77 A"/>
    <property type="chains" value="I1/I2/i1/i2=1-38"/>
</dbReference>
<dbReference type="PDBsum" id="4YUU"/>
<dbReference type="SMR" id="O19882"/>
<dbReference type="GeneID" id="800258"/>
<dbReference type="GO" id="GO:0009535">
    <property type="term" value="C:chloroplast thylakoid membrane"/>
    <property type="evidence" value="ECO:0007669"/>
    <property type="project" value="UniProtKB-SubCell"/>
</dbReference>
<dbReference type="GO" id="GO:0009539">
    <property type="term" value="C:photosystem II reaction center"/>
    <property type="evidence" value="ECO:0007669"/>
    <property type="project" value="InterPro"/>
</dbReference>
<dbReference type="GO" id="GO:0015979">
    <property type="term" value="P:photosynthesis"/>
    <property type="evidence" value="ECO:0007669"/>
    <property type="project" value="UniProtKB-UniRule"/>
</dbReference>
<dbReference type="HAMAP" id="MF_01316">
    <property type="entry name" value="PSII_PsbI"/>
    <property type="match status" value="1"/>
</dbReference>
<dbReference type="InterPro" id="IPR003686">
    <property type="entry name" value="PSII_PsbI"/>
</dbReference>
<dbReference type="InterPro" id="IPR037271">
    <property type="entry name" value="PSII_PsbI_sf"/>
</dbReference>
<dbReference type="NCBIfam" id="NF002735">
    <property type="entry name" value="PRK02655.1"/>
    <property type="match status" value="1"/>
</dbReference>
<dbReference type="PANTHER" id="PTHR35772">
    <property type="entry name" value="PHOTOSYSTEM II REACTION CENTER PROTEIN I"/>
    <property type="match status" value="1"/>
</dbReference>
<dbReference type="PANTHER" id="PTHR35772:SF1">
    <property type="entry name" value="PHOTOSYSTEM II REACTION CENTER PROTEIN I"/>
    <property type="match status" value="1"/>
</dbReference>
<dbReference type="Pfam" id="PF02532">
    <property type="entry name" value="PsbI"/>
    <property type="match status" value="1"/>
</dbReference>
<dbReference type="SUPFAM" id="SSF161041">
    <property type="entry name" value="Photosystem II reaction center protein I, PsbI"/>
    <property type="match status" value="1"/>
</dbReference>
<geneLocation type="chloroplast"/>
<accession>O19882</accession>
<organism>
    <name type="scientific">Cyanidium caldarium</name>
    <name type="common">Red alga</name>
    <dbReference type="NCBI Taxonomy" id="2771"/>
    <lineage>
        <taxon>Eukaryota</taxon>
        <taxon>Rhodophyta</taxon>
        <taxon>Bangiophyceae</taxon>
        <taxon>Cyanidiales</taxon>
        <taxon>Cyanidiaceae</taxon>
        <taxon>Cyanidium</taxon>
    </lineage>
</organism>
<name>PSBI_CYACA</name>
<gene>
    <name evidence="1" type="primary">psbI</name>
</gene>
<feature type="chain" id="PRO_0000219623" description="Photosystem II reaction center protein I">
    <location>
        <begin position="1"/>
        <end position="38"/>
    </location>
</feature>
<feature type="transmembrane region" description="Helical" evidence="1">
    <location>
        <begin position="4"/>
        <end position="24"/>
    </location>
</feature>
<protein>
    <recommendedName>
        <fullName evidence="1">Photosystem II reaction center protein I</fullName>
        <shortName evidence="1">PSII-I</shortName>
    </recommendedName>
    <alternativeName>
        <fullName evidence="1">PSII 4.8 kDa protein</fullName>
    </alternativeName>
</protein>